<evidence type="ECO:0000255" key="1">
    <source>
        <dbReference type="HAMAP-Rule" id="MF_00226"/>
    </source>
</evidence>
<name>Y2021_SACI4</name>
<protein>
    <recommendedName>
        <fullName evidence="1">Protein M1425_2021</fullName>
    </recommendedName>
</protein>
<accession>C3MYX8</accession>
<feature type="chain" id="PRO_1000204334" description="Protein M1425_2021">
    <location>
        <begin position="1"/>
        <end position="263"/>
    </location>
</feature>
<comment type="similarity">
    <text evidence="1">Belongs to the CinA family.</text>
</comment>
<dbReference type="EMBL" id="CP001400">
    <property type="protein sequence ID" value="ACP38762.1"/>
    <property type="molecule type" value="Genomic_DNA"/>
</dbReference>
<dbReference type="RefSeq" id="WP_012711988.1">
    <property type="nucleotide sequence ID" value="NC_012588.1"/>
</dbReference>
<dbReference type="SMR" id="C3MYX8"/>
<dbReference type="KEGG" id="sia:M1425_2021"/>
<dbReference type="HOGENOM" id="CLU_030805_0_5_2"/>
<dbReference type="Proteomes" id="UP000001350">
    <property type="component" value="Chromosome"/>
</dbReference>
<dbReference type="CDD" id="cd00885">
    <property type="entry name" value="cinA"/>
    <property type="match status" value="1"/>
</dbReference>
<dbReference type="Gene3D" id="3.40.980.10">
    <property type="entry name" value="MoaB/Mog-like domain"/>
    <property type="match status" value="1"/>
</dbReference>
<dbReference type="HAMAP" id="MF_00226_A">
    <property type="entry name" value="CinA_A"/>
    <property type="match status" value="1"/>
</dbReference>
<dbReference type="InterPro" id="IPR050101">
    <property type="entry name" value="CinA"/>
</dbReference>
<dbReference type="InterPro" id="IPR023055">
    <property type="entry name" value="CinA_Arc"/>
</dbReference>
<dbReference type="InterPro" id="IPR036425">
    <property type="entry name" value="MoaB/Mog-like_dom_sf"/>
</dbReference>
<dbReference type="InterPro" id="IPR001453">
    <property type="entry name" value="MoaB/Mog_dom"/>
</dbReference>
<dbReference type="NCBIfam" id="NF002291">
    <property type="entry name" value="PRK01215.1"/>
    <property type="match status" value="1"/>
</dbReference>
<dbReference type="PANTHER" id="PTHR13939">
    <property type="entry name" value="NICOTINAMIDE-NUCLEOTIDE AMIDOHYDROLASE PNCC"/>
    <property type="match status" value="1"/>
</dbReference>
<dbReference type="PANTHER" id="PTHR13939:SF0">
    <property type="entry name" value="NMN AMIDOHYDROLASE-LIKE PROTEIN YFAY"/>
    <property type="match status" value="1"/>
</dbReference>
<dbReference type="Pfam" id="PF00994">
    <property type="entry name" value="MoCF_biosynth"/>
    <property type="match status" value="1"/>
</dbReference>
<dbReference type="SMART" id="SM00852">
    <property type="entry name" value="MoCF_biosynth"/>
    <property type="match status" value="1"/>
</dbReference>
<dbReference type="SUPFAM" id="SSF53218">
    <property type="entry name" value="Molybdenum cofactor biosynthesis proteins"/>
    <property type="match status" value="1"/>
</dbReference>
<proteinExistence type="inferred from homology"/>
<reference key="1">
    <citation type="journal article" date="2009" name="Proc. Natl. Acad. Sci. U.S.A.">
        <title>Biogeography of the Sulfolobus islandicus pan-genome.</title>
        <authorList>
            <person name="Reno M.L."/>
            <person name="Held N.L."/>
            <person name="Fields C.J."/>
            <person name="Burke P.V."/>
            <person name="Whitaker R.J."/>
        </authorList>
    </citation>
    <scope>NUCLEOTIDE SEQUENCE [LARGE SCALE GENOMIC DNA]</scope>
    <source>
        <strain>M.14.25 / Kamchatka #1</strain>
    </source>
</reference>
<gene>
    <name type="ordered locus">M1425_2021</name>
</gene>
<sequence length="263" mass="29847">MDYWFAEIVTIGNEVLSGKTVNTNASHIGRRLTSLGFTVRRITVVMDDIDEIVSAFREAIDRKPKVIVSSGGLGPTWDDKTAEGLAKALGVNLELNKTAFDMILEKYTKRNIPLTEERKKMAYLPYGAMAVENNEGIAPGIYIYHNNIDILATPGVPREMENVLENFINKMLRNKPNLKYLEDFIYVENVMESALAPYVKELVKKYDIYIKTHPKSYELLRPILEIQIAGSGREEEIKVKIEKVKNELLDAIKKLNGIIRNSL</sequence>
<organism>
    <name type="scientific">Saccharolobus islandicus (strain M.14.25 / Kamchatka #1)</name>
    <name type="common">Sulfolobus islandicus</name>
    <dbReference type="NCBI Taxonomy" id="427317"/>
    <lineage>
        <taxon>Archaea</taxon>
        <taxon>Thermoproteota</taxon>
        <taxon>Thermoprotei</taxon>
        <taxon>Sulfolobales</taxon>
        <taxon>Sulfolobaceae</taxon>
        <taxon>Saccharolobus</taxon>
    </lineage>
</organism>